<reference key="1">
    <citation type="journal article" date="2006" name="J. Bacteriol.">
        <title>Genome sequence of Aeromonas hydrophila ATCC 7966T: jack of all trades.</title>
        <authorList>
            <person name="Seshadri R."/>
            <person name="Joseph S.W."/>
            <person name="Chopra A.K."/>
            <person name="Sha J."/>
            <person name="Shaw J."/>
            <person name="Graf J."/>
            <person name="Haft D.H."/>
            <person name="Wu M."/>
            <person name="Ren Q."/>
            <person name="Rosovitz M.J."/>
            <person name="Madupu R."/>
            <person name="Tallon L."/>
            <person name="Kim M."/>
            <person name="Jin S."/>
            <person name="Vuong H."/>
            <person name="Stine O.C."/>
            <person name="Ali A."/>
            <person name="Horneman A.J."/>
            <person name="Heidelberg J.F."/>
        </authorList>
    </citation>
    <scope>NUCLEOTIDE SEQUENCE [LARGE SCALE GENOMIC DNA]</scope>
    <source>
        <strain>ATCC 7966 / DSM 30187 / BCRC 13018 / CCUG 14551 / JCM 1027 / KCTC 2358 / NCIMB 9240 / NCTC 8049</strain>
    </source>
</reference>
<feature type="chain" id="PRO_0000300514" description="Formate--tetrahydrofolate ligase">
    <location>
        <begin position="1"/>
        <end position="576"/>
    </location>
</feature>
<feature type="binding site" evidence="1">
    <location>
        <begin position="64"/>
        <end position="71"/>
    </location>
    <ligand>
        <name>ATP</name>
        <dbReference type="ChEBI" id="CHEBI:30616"/>
    </ligand>
</feature>
<gene>
    <name evidence="1" type="primary">fhs</name>
    <name type="ordered locus">AHA_1604</name>
</gene>
<organism>
    <name type="scientific">Aeromonas hydrophila subsp. hydrophila (strain ATCC 7966 / DSM 30187 / BCRC 13018 / CCUG 14551 / JCM 1027 / KCTC 2358 / NCIMB 9240 / NCTC 8049)</name>
    <dbReference type="NCBI Taxonomy" id="380703"/>
    <lineage>
        <taxon>Bacteria</taxon>
        <taxon>Pseudomonadati</taxon>
        <taxon>Pseudomonadota</taxon>
        <taxon>Gammaproteobacteria</taxon>
        <taxon>Aeromonadales</taxon>
        <taxon>Aeromonadaceae</taxon>
        <taxon>Aeromonas</taxon>
    </lineage>
</organism>
<sequence>MLSDIEISRQSPRLPIHALAERLAIPSHQLHPYGHYKGKLSLELLKSLPKPAGKLVLVSAITPTPLGEGKTVTTLGLSMGLNHIGQPSIATIRQPSLGPVFGVKGGAAGGGHAQVVPMEEMNLHLTGDFHALTAAHNLAAAALDARLFHERKLGDQFSARTGLQRLDIDADNILWPRTLDMNDRALRHLTIGQGNAADGVERSDRFVITAASELMAILALASDLKDLRQRIGRIQLARDLRGKPITAEQLEVAGAMTVLLKEALQPTLMQTTEQTSVLVHAGPFANIAHGNSSVIADRMALGLTDYVVTEAGFGSDMGLEKFFNIKHRQSGITPACVVLVATVRGLKANSGLLDIRPGQPLPESLLREDLPTLEQGCANLGWHIANARRYGVPVVVAINRFPTDSEAELALLARAALRAGACGSAISSAFTQGGAGASELAQAVVAACEQPGKVKLLYPDQASLGAKLATLVECGYGGRGVQLSDKARQQLAQLSAEGWDHLPVCVAKTPLSISHDPALKGVPTDFEVPIEEVKLCAGAGFVYALAGPIMTMPGLGSLPAYRHIDIDDNGEIVGLS</sequence>
<protein>
    <recommendedName>
        <fullName evidence="1">Formate--tetrahydrofolate ligase</fullName>
        <ecNumber evidence="1">6.3.4.3</ecNumber>
    </recommendedName>
    <alternativeName>
        <fullName evidence="1">Formyltetrahydrofolate synthetase</fullName>
        <shortName evidence="1">FHS</shortName>
        <shortName evidence="1">FTHFS</shortName>
    </alternativeName>
</protein>
<comment type="catalytic activity">
    <reaction evidence="1">
        <text>(6S)-5,6,7,8-tetrahydrofolate + formate + ATP = (6R)-10-formyltetrahydrofolate + ADP + phosphate</text>
        <dbReference type="Rhea" id="RHEA:20221"/>
        <dbReference type="ChEBI" id="CHEBI:15740"/>
        <dbReference type="ChEBI" id="CHEBI:30616"/>
        <dbReference type="ChEBI" id="CHEBI:43474"/>
        <dbReference type="ChEBI" id="CHEBI:57453"/>
        <dbReference type="ChEBI" id="CHEBI:195366"/>
        <dbReference type="ChEBI" id="CHEBI:456216"/>
        <dbReference type="EC" id="6.3.4.3"/>
    </reaction>
</comment>
<comment type="pathway">
    <text evidence="1">One-carbon metabolism; tetrahydrofolate interconversion.</text>
</comment>
<comment type="similarity">
    <text evidence="1">Belongs to the formate--tetrahydrofolate ligase family.</text>
</comment>
<dbReference type="EC" id="6.3.4.3" evidence="1"/>
<dbReference type="EMBL" id="CP000462">
    <property type="protein sequence ID" value="ABK36840.1"/>
    <property type="molecule type" value="Genomic_DNA"/>
</dbReference>
<dbReference type="RefSeq" id="WP_011705499.1">
    <property type="nucleotide sequence ID" value="NC_008570.1"/>
</dbReference>
<dbReference type="RefSeq" id="YP_856140.1">
    <property type="nucleotide sequence ID" value="NC_008570.1"/>
</dbReference>
<dbReference type="SMR" id="A0KIN9"/>
<dbReference type="STRING" id="380703.AHA_1604"/>
<dbReference type="EnsemblBacteria" id="ABK36840">
    <property type="protein sequence ID" value="ABK36840"/>
    <property type="gene ID" value="AHA_1604"/>
</dbReference>
<dbReference type="GeneID" id="4488356"/>
<dbReference type="KEGG" id="aha:AHA_1604"/>
<dbReference type="PATRIC" id="fig|380703.7.peg.1616"/>
<dbReference type="eggNOG" id="COG2759">
    <property type="taxonomic scope" value="Bacteria"/>
</dbReference>
<dbReference type="HOGENOM" id="CLU_003601_3_3_6"/>
<dbReference type="OrthoDB" id="9761733at2"/>
<dbReference type="UniPathway" id="UPA00193"/>
<dbReference type="Proteomes" id="UP000000756">
    <property type="component" value="Chromosome"/>
</dbReference>
<dbReference type="GO" id="GO:0005524">
    <property type="term" value="F:ATP binding"/>
    <property type="evidence" value="ECO:0007669"/>
    <property type="project" value="UniProtKB-UniRule"/>
</dbReference>
<dbReference type="GO" id="GO:0004329">
    <property type="term" value="F:formate-tetrahydrofolate ligase activity"/>
    <property type="evidence" value="ECO:0007669"/>
    <property type="project" value="UniProtKB-UniRule"/>
</dbReference>
<dbReference type="GO" id="GO:0035999">
    <property type="term" value="P:tetrahydrofolate interconversion"/>
    <property type="evidence" value="ECO:0007669"/>
    <property type="project" value="UniProtKB-UniRule"/>
</dbReference>
<dbReference type="FunFam" id="3.10.410.10:FF:000001">
    <property type="entry name" value="Putative formate--tetrahydrofolate ligase"/>
    <property type="match status" value="1"/>
</dbReference>
<dbReference type="Gene3D" id="3.30.1510.10">
    <property type="entry name" value="Domain 2, N(10)-formyltetrahydrofolate synthetase"/>
    <property type="match status" value="1"/>
</dbReference>
<dbReference type="Gene3D" id="3.10.410.10">
    <property type="entry name" value="Formyltetrahydrofolate synthetase, domain 3"/>
    <property type="match status" value="1"/>
</dbReference>
<dbReference type="Gene3D" id="3.40.50.300">
    <property type="entry name" value="P-loop containing nucleotide triphosphate hydrolases"/>
    <property type="match status" value="1"/>
</dbReference>
<dbReference type="HAMAP" id="MF_01543">
    <property type="entry name" value="FTHFS"/>
    <property type="match status" value="1"/>
</dbReference>
<dbReference type="InterPro" id="IPR000559">
    <property type="entry name" value="Formate_THF_ligase"/>
</dbReference>
<dbReference type="InterPro" id="IPR020628">
    <property type="entry name" value="Formate_THF_ligase_CS"/>
</dbReference>
<dbReference type="InterPro" id="IPR027417">
    <property type="entry name" value="P-loop_NTPase"/>
</dbReference>
<dbReference type="NCBIfam" id="NF010030">
    <property type="entry name" value="PRK13505.1"/>
    <property type="match status" value="1"/>
</dbReference>
<dbReference type="NCBIfam" id="NF010031">
    <property type="entry name" value="PRK13506.1"/>
    <property type="match status" value="1"/>
</dbReference>
<dbReference type="Pfam" id="PF01268">
    <property type="entry name" value="FTHFS"/>
    <property type="match status" value="1"/>
</dbReference>
<dbReference type="SUPFAM" id="SSF52540">
    <property type="entry name" value="P-loop containing nucleoside triphosphate hydrolases"/>
    <property type="match status" value="1"/>
</dbReference>
<dbReference type="PROSITE" id="PS00721">
    <property type="entry name" value="FTHFS_1"/>
    <property type="match status" value="1"/>
</dbReference>
<dbReference type="PROSITE" id="PS00722">
    <property type="entry name" value="FTHFS_2"/>
    <property type="match status" value="1"/>
</dbReference>
<keyword id="KW-0067">ATP-binding</keyword>
<keyword id="KW-0436">Ligase</keyword>
<keyword id="KW-0547">Nucleotide-binding</keyword>
<keyword id="KW-0554">One-carbon metabolism</keyword>
<keyword id="KW-1185">Reference proteome</keyword>
<evidence type="ECO:0000255" key="1">
    <source>
        <dbReference type="HAMAP-Rule" id="MF_01543"/>
    </source>
</evidence>
<name>FTHS_AERHH</name>
<proteinExistence type="inferred from homology"/>
<accession>A0KIN9</accession>